<comment type="function">
    <text evidence="1">Protein S19 forms a complex with S13 that binds strongly to the 16S ribosomal RNA.</text>
</comment>
<comment type="similarity">
    <text evidence="1">Belongs to the universal ribosomal protein uS19 family.</text>
</comment>
<gene>
    <name evidence="1" type="primary">rpsS</name>
    <name type="ordered locus">gbs0062</name>
</gene>
<feature type="chain" id="PRO_0000129918" description="Small ribosomal subunit protein uS19">
    <location>
        <begin position="1"/>
        <end position="92"/>
    </location>
</feature>
<protein>
    <recommendedName>
        <fullName evidence="1">Small ribosomal subunit protein uS19</fullName>
    </recommendedName>
    <alternativeName>
        <fullName evidence="2">30S ribosomal protein S19</fullName>
    </alternativeName>
</protein>
<name>RS19_STRA3</name>
<reference key="1">
    <citation type="journal article" date="2002" name="Mol. Microbiol.">
        <title>Genome sequence of Streptococcus agalactiae, a pathogen causing invasive neonatal disease.</title>
        <authorList>
            <person name="Glaser P."/>
            <person name="Rusniok C."/>
            <person name="Buchrieser C."/>
            <person name="Chevalier F."/>
            <person name="Frangeul L."/>
            <person name="Msadek T."/>
            <person name="Zouine M."/>
            <person name="Couve E."/>
            <person name="Lalioui L."/>
            <person name="Poyart C."/>
            <person name="Trieu-Cuot P."/>
            <person name="Kunst F."/>
        </authorList>
    </citation>
    <scope>NUCLEOTIDE SEQUENCE [LARGE SCALE GENOMIC DNA]</scope>
    <source>
        <strain>NEM316</strain>
    </source>
</reference>
<keyword id="KW-0687">Ribonucleoprotein</keyword>
<keyword id="KW-0689">Ribosomal protein</keyword>
<keyword id="KW-0694">RNA-binding</keyword>
<keyword id="KW-0699">rRNA-binding</keyword>
<accession>P66499</accession>
<accession>Q9A1X0</accession>
<sequence length="92" mass="10622">MGRSLKKGPFVDEHLMKKVEAQANDEKKKVIKTWSRRSTIFPSFIGYTIAVYDGRKHVPVYIQEDMVGHKLGEFAPTRTYKGHAADDKKTRR</sequence>
<dbReference type="EMBL" id="AL766843">
    <property type="protein sequence ID" value="CAD45707.1"/>
    <property type="molecule type" value="Genomic_DNA"/>
</dbReference>
<dbReference type="RefSeq" id="WP_000533765.1">
    <property type="nucleotide sequence ID" value="NC_004368.1"/>
</dbReference>
<dbReference type="SMR" id="P66499"/>
<dbReference type="GeneID" id="98392396"/>
<dbReference type="KEGG" id="san:rpsS"/>
<dbReference type="eggNOG" id="COG0185">
    <property type="taxonomic scope" value="Bacteria"/>
</dbReference>
<dbReference type="HOGENOM" id="CLU_144911_0_1_9"/>
<dbReference type="Proteomes" id="UP000000823">
    <property type="component" value="Chromosome"/>
</dbReference>
<dbReference type="GO" id="GO:0005737">
    <property type="term" value="C:cytoplasm"/>
    <property type="evidence" value="ECO:0007669"/>
    <property type="project" value="UniProtKB-ARBA"/>
</dbReference>
<dbReference type="GO" id="GO:0015935">
    <property type="term" value="C:small ribosomal subunit"/>
    <property type="evidence" value="ECO:0007669"/>
    <property type="project" value="InterPro"/>
</dbReference>
<dbReference type="GO" id="GO:0019843">
    <property type="term" value="F:rRNA binding"/>
    <property type="evidence" value="ECO:0007669"/>
    <property type="project" value="UniProtKB-UniRule"/>
</dbReference>
<dbReference type="GO" id="GO:0003735">
    <property type="term" value="F:structural constituent of ribosome"/>
    <property type="evidence" value="ECO:0007669"/>
    <property type="project" value="InterPro"/>
</dbReference>
<dbReference type="GO" id="GO:0000028">
    <property type="term" value="P:ribosomal small subunit assembly"/>
    <property type="evidence" value="ECO:0007669"/>
    <property type="project" value="TreeGrafter"/>
</dbReference>
<dbReference type="GO" id="GO:0006412">
    <property type="term" value="P:translation"/>
    <property type="evidence" value="ECO:0007669"/>
    <property type="project" value="UniProtKB-UniRule"/>
</dbReference>
<dbReference type="FunFam" id="3.30.860.10:FF:000001">
    <property type="entry name" value="30S ribosomal protein S19"/>
    <property type="match status" value="1"/>
</dbReference>
<dbReference type="Gene3D" id="3.30.860.10">
    <property type="entry name" value="30s Ribosomal Protein S19, Chain A"/>
    <property type="match status" value="1"/>
</dbReference>
<dbReference type="HAMAP" id="MF_00531">
    <property type="entry name" value="Ribosomal_uS19"/>
    <property type="match status" value="1"/>
</dbReference>
<dbReference type="InterPro" id="IPR002222">
    <property type="entry name" value="Ribosomal_uS19"/>
</dbReference>
<dbReference type="InterPro" id="IPR005732">
    <property type="entry name" value="Ribosomal_uS19_bac-type"/>
</dbReference>
<dbReference type="InterPro" id="IPR020934">
    <property type="entry name" value="Ribosomal_uS19_CS"/>
</dbReference>
<dbReference type="InterPro" id="IPR023575">
    <property type="entry name" value="Ribosomal_uS19_SF"/>
</dbReference>
<dbReference type="NCBIfam" id="TIGR01050">
    <property type="entry name" value="rpsS_bact"/>
    <property type="match status" value="1"/>
</dbReference>
<dbReference type="PANTHER" id="PTHR11880">
    <property type="entry name" value="RIBOSOMAL PROTEIN S19P FAMILY MEMBER"/>
    <property type="match status" value="1"/>
</dbReference>
<dbReference type="PANTHER" id="PTHR11880:SF8">
    <property type="entry name" value="SMALL RIBOSOMAL SUBUNIT PROTEIN US19M"/>
    <property type="match status" value="1"/>
</dbReference>
<dbReference type="Pfam" id="PF00203">
    <property type="entry name" value="Ribosomal_S19"/>
    <property type="match status" value="1"/>
</dbReference>
<dbReference type="PIRSF" id="PIRSF002144">
    <property type="entry name" value="Ribosomal_S19"/>
    <property type="match status" value="1"/>
</dbReference>
<dbReference type="PRINTS" id="PR00975">
    <property type="entry name" value="RIBOSOMALS19"/>
</dbReference>
<dbReference type="SUPFAM" id="SSF54570">
    <property type="entry name" value="Ribosomal protein S19"/>
    <property type="match status" value="1"/>
</dbReference>
<dbReference type="PROSITE" id="PS00323">
    <property type="entry name" value="RIBOSOMAL_S19"/>
    <property type="match status" value="1"/>
</dbReference>
<evidence type="ECO:0000255" key="1">
    <source>
        <dbReference type="HAMAP-Rule" id="MF_00531"/>
    </source>
</evidence>
<evidence type="ECO:0000305" key="2"/>
<proteinExistence type="inferred from homology"/>
<organism>
    <name type="scientific">Streptococcus agalactiae serotype III (strain NEM316)</name>
    <dbReference type="NCBI Taxonomy" id="211110"/>
    <lineage>
        <taxon>Bacteria</taxon>
        <taxon>Bacillati</taxon>
        <taxon>Bacillota</taxon>
        <taxon>Bacilli</taxon>
        <taxon>Lactobacillales</taxon>
        <taxon>Streptococcaceae</taxon>
        <taxon>Streptococcus</taxon>
    </lineage>
</organism>